<feature type="signal peptide" evidence="2">
    <location>
        <begin position="1"/>
        <end position="14"/>
    </location>
</feature>
<feature type="chain" id="PRO_0000245867" description="Collectrin">
    <location>
        <begin position="15"/>
        <end position="222"/>
    </location>
</feature>
<feature type="topological domain" description="Extracellular" evidence="12">
    <location>
        <begin position="15"/>
        <end position="141"/>
    </location>
</feature>
<feature type="transmembrane region" description="Helical" evidence="3">
    <location>
        <begin position="142"/>
        <end position="162"/>
    </location>
</feature>
<feature type="topological domain" description="Cytoplasmic" evidence="12">
    <location>
        <begin position="163"/>
        <end position="222"/>
    </location>
</feature>
<feature type="domain" description="Collectrin-like" evidence="3">
    <location>
        <begin position="21"/>
        <end position="222"/>
    </location>
</feature>
<feature type="site" description="Cleavage by BACE2" evidence="7">
    <location>
        <begin position="125"/>
        <end position="126"/>
    </location>
</feature>
<feature type="modified residue" description="Phosphothreonine" evidence="1">
    <location>
        <position position="214"/>
    </location>
</feature>
<feature type="modified residue" description="Phosphothreonine" evidence="1">
    <location>
        <position position="220"/>
    </location>
</feature>
<feature type="glycosylation site" description="N-linked (GlcNAc...) asparagine" evidence="2">
    <location>
        <position position="76"/>
    </location>
</feature>
<feature type="glycosylation site" description="N-linked (GlcNAc...) asparagine" evidence="2">
    <location>
        <position position="93"/>
    </location>
</feature>
<feature type="mutagenesis site" description="Increased dimerization leading to hyperoligomerized. Abolishes processing by BACE2. Abolishes localization to the cell membrane." evidence="7">
    <original>C</original>
    <variation>A</variation>
    <location>
        <position position="75"/>
    </location>
</feature>
<feature type="mutagenesis site" description="Loss of localization to the cell membrane. Abolishes processing by BACE2. Loss of localization to the cell membrane; when associated with I-93." evidence="7">
    <original>N</original>
    <variation>I</variation>
    <location>
        <position position="76"/>
    </location>
</feature>
<feature type="mutagenesis site" description="Loss of localization to the cell membrane. Abolishes processing by BACE2. Loss of localization to the cell membrane; when associated with I-76." evidence="7">
    <original>N</original>
    <variation>I</variation>
    <location>
        <position position="93"/>
    </location>
</feature>
<feature type="mutagenesis site" description="Increases processing by BACE2. Decreases of protein abundance." evidence="7">
    <original>AFFLN</original>
    <variation>GGGGG</variation>
    <variation>AAAAA</variation>
    <variation>TYYLR</variation>
    <location>
        <begin position="115"/>
        <end position="119"/>
    </location>
</feature>
<feature type="mutagenesis site" description="Does not affet processing by BACE2." evidence="7">
    <original>LEFLKI</original>
    <variation>NTYGKR</variation>
    <location>
        <begin position="123"/>
        <end position="128"/>
    </location>
</feature>
<feature type="mutagenesis site" description="Does not affect dimerization. Does not affect cell membrane localization. Abolishes dimerization; when associated with A-186." evidence="7">
    <original>C</original>
    <variation>A</variation>
    <location>
        <position position="152"/>
    </location>
</feature>
<feature type="mutagenesis site" description="Abolishes dimerization. Does not affect cell membrane localization. Does not affect processing by BACE2. Abolishes dimerization; when associated with A-152." evidence="7">
    <original>C</original>
    <variation>A</variation>
    <location>
        <position position="186"/>
    </location>
</feature>
<gene>
    <name evidence="13" type="primary">CLTRN</name>
    <name evidence="10" type="synonym">TMEM27</name>
    <name type="ORF">UNQ679/PRO1312</name>
</gene>
<protein>
    <recommendedName>
        <fullName evidence="9">Collectrin</fullName>
    </recommendedName>
    <alternativeName>
        <fullName>Transmembrane protein 27</fullName>
    </alternativeName>
</protein>
<comment type="function">
    <text evidence="1 5">Plays an important role in amino acid transport by acting as binding partner of amino acid transporters SLC6A18 and SLC6A19, regulating their trafficking on the cell surface and their amino acid transporter activity (By similarity). May also play a role in trafficking of amino acid transporters SLC3A1 and SLC7A9 to the renal cortical cell membrane (By similarity). Regulator of SNARE complex function (PubMed:16330323). Stimulator of beta cell replication (PubMed:16330323).</text>
</comment>
<comment type="subunit">
    <text evidence="1 5 7">Monomer (PubMed:22628310). Homodimer; dimerization prevents CLTRN cleavage by BACE2 (PubMed:22628310). Interacts with SLC6A18; this interaction regulates the trafficking of SLC6A18 to the cell membrane and its amino acid transporter activity (By similarity). Interacts with SLC6A19; this interaction regulates the trafficking of SLC6A19 to the cell membrane and its amino acid transporter activity (By similarity). Interacts with SNAPIN (PubMed:16330323).</text>
</comment>
<comment type="interaction">
    <interactant intactId="EBI-3924906">
        <id>Q9HBJ8</id>
    </interactant>
    <interactant intactId="EBI-2804156">
        <id>Q6UX06</id>
        <label>OLFM4</label>
    </interactant>
    <organismsDiffer>false</organismsDiffer>
    <experiments>3</experiments>
</comment>
<comment type="interaction">
    <interactant intactId="EBI-3924906">
        <id>Q9HBJ8</id>
    </interactant>
    <interactant intactId="EBI-8640191">
        <id>Q9NRQ5</id>
        <label>SMCO4</label>
    </interactant>
    <organismsDiffer>false</organismsDiffer>
    <experiments>3</experiments>
</comment>
<comment type="interaction">
    <interactant intactId="EBI-3924906">
        <id>Q9HBJ8</id>
    </interactant>
    <interactant intactId="EBI-988826">
        <id>Q9Y385</id>
        <label>UBE2J1</label>
    </interactant>
    <organismsDiffer>false</organismsDiffer>
    <experiments>3</experiments>
</comment>
<comment type="subcellular location">
    <subcellularLocation>
        <location evidence="7">Cell membrane</location>
        <topology evidence="2">Single-pass type I membrane protein</topology>
    </subcellularLocation>
    <text evidence="1">Localizes to the brush border membranes of cells in the proximal tubules of kidney (By similarity). Colocalizes with SLC6A19 in the early proximal S1 tubule (By similarity).</text>
</comment>
<comment type="tissue specificity">
    <text evidence="4 5">Kidney; collecting ducts. Pancreas; beta cells of islets.</text>
</comment>
<comment type="domain">
    <text evidence="7">The cleavage site containing the double Phe-Phe motif acts as negative regulator of shedding by BACE2.</text>
</comment>
<comment type="PTM">
    <text evidence="7">Glycosylated. Glycosylation is required for plasma membrane localization and for its cleavage by BACE2.</text>
</comment>
<comment type="PTM">
    <text evidence="1 6 7">Proteolytically processed in pancreatic beta cells by BACE2 leading to the generation and extracellular release of soluble CLTRN, and a corresponding cell-associated C-terminal fragment which is later cleaved by gamma-secretase. This shedding process inactivates CLTRN (By similarity). Three cleavage sites have been identified for BACE2, two clustered sites after Phe-116 and Leu-118 and a more membrane proximal site at Phe-125; the preferred BACE2 cleavage site seems to be between Phe-125 and Leu-126, Phe-116 and Leu-118 act as alternative sites (PubMed:21907142, PubMed:22628310).</text>
</comment>
<comment type="disease">
    <text evidence="8">An interstitial deletion on chromosome Xp22.2 encompassing CLTRN and a deletion spanning CLTRN exons 1 to 3 have been found in two individuals with a neuropsychiatric disorder characterized by autistic features, anxiety, depression, compulsions, motor tics, and neutral aminoaciduria. Plasma amino acids were normal in both patients.</text>
</comment>
<comment type="similarity">
    <text evidence="11">Belongs to the CLTRN family.</text>
</comment>
<comment type="sequence caution" evidence="11">
    <conflict type="frameshift">
        <sequence resource="EMBL-CDS" id="AAQ89419"/>
    </conflict>
</comment>
<evidence type="ECO:0000250" key="1">
    <source>
        <dbReference type="UniProtKB" id="Q9ESG4"/>
    </source>
</evidence>
<evidence type="ECO:0000255" key="2"/>
<evidence type="ECO:0000255" key="3">
    <source>
        <dbReference type="PROSITE-ProRule" id="PRU01354"/>
    </source>
</evidence>
<evidence type="ECO:0000269" key="4">
    <source>
    </source>
</evidence>
<evidence type="ECO:0000269" key="5">
    <source>
    </source>
</evidence>
<evidence type="ECO:0000269" key="6">
    <source>
    </source>
</evidence>
<evidence type="ECO:0000269" key="7">
    <source>
    </source>
</evidence>
<evidence type="ECO:0000269" key="8">
    <source>
    </source>
</evidence>
<evidence type="ECO:0000303" key="9">
    <source>
    </source>
</evidence>
<evidence type="ECO:0000303" key="10">
    <source>
    </source>
</evidence>
<evidence type="ECO:0000305" key="11"/>
<evidence type="ECO:0000305" key="12">
    <source>
    </source>
</evidence>
<evidence type="ECO:0000312" key="13">
    <source>
        <dbReference type="HGNC" id="HGNC:29437"/>
    </source>
</evidence>
<accession>Q9HBJ8</accession>
<accession>B2R9M1</accession>
<accession>Q6UW07</accession>
<keyword id="KW-1003">Cell membrane</keyword>
<keyword id="KW-0325">Glycoprotein</keyword>
<keyword id="KW-0472">Membrane</keyword>
<keyword id="KW-0597">Phosphoprotein</keyword>
<keyword id="KW-1267">Proteomics identification</keyword>
<keyword id="KW-1185">Reference proteome</keyword>
<keyword id="KW-0732">Signal</keyword>
<keyword id="KW-0812">Transmembrane</keyword>
<keyword id="KW-1133">Transmembrane helix</keyword>
<proteinExistence type="evidence at protein level"/>
<sequence length="222" mass="25235">MLWLLFFLVTAIHAELCQPGAENAFKVRLSIRTALGDKAYAWDTNEEYLFKAMVAFSMRKVPNREATEISHVLLCNVTQRVSFWFVVTDPSKNHTLPAVEVQSAIRMNKNRINNAFFLNDQTLEFLKIPSTLAPPMDPSVPIWIIIFGVIFCIIIVAIALLILSGIWQRRRKNKEPSEVDDAEDKCENMITIENGIPSDPLDMKGGHINDAFMTEDERLTPL</sequence>
<reference key="1">
    <citation type="journal article" date="2001" name="J. Biol. Chem.">
        <title>Collectrin, a collecting duct-specific transmembrane glycoprotein, is a novel homolog of ACE2 and is developmentally regulated in embryonic kidneys.</title>
        <authorList>
            <person name="Zhang H."/>
            <person name="Wada J."/>
            <person name="Hida K."/>
            <person name="Tsuchiyama Y."/>
            <person name="Hiragushi K."/>
            <person name="Shikata K."/>
            <person name="Wang H."/>
            <person name="Lin S."/>
            <person name="Kanwar Y.S."/>
            <person name="Makino H."/>
        </authorList>
    </citation>
    <scope>NUCLEOTIDE SEQUENCE [MRNA]</scope>
    <scope>TISSUE SPECIFICITY</scope>
</reference>
<reference key="2">
    <citation type="journal article" date="2003" name="Genome Res.">
        <title>The secreted protein discovery initiative (SPDI), a large-scale effort to identify novel human secreted and transmembrane proteins: a bioinformatics assessment.</title>
        <authorList>
            <person name="Clark H.F."/>
            <person name="Gurney A.L."/>
            <person name="Abaya E."/>
            <person name="Baker K."/>
            <person name="Baldwin D.T."/>
            <person name="Brush J."/>
            <person name="Chen J."/>
            <person name="Chow B."/>
            <person name="Chui C."/>
            <person name="Crowley C."/>
            <person name="Currell B."/>
            <person name="Deuel B."/>
            <person name="Dowd P."/>
            <person name="Eaton D."/>
            <person name="Foster J.S."/>
            <person name="Grimaldi C."/>
            <person name="Gu Q."/>
            <person name="Hass P.E."/>
            <person name="Heldens S."/>
            <person name="Huang A."/>
            <person name="Kim H.S."/>
            <person name="Klimowski L."/>
            <person name="Jin Y."/>
            <person name="Johnson S."/>
            <person name="Lee J."/>
            <person name="Lewis L."/>
            <person name="Liao D."/>
            <person name="Mark M.R."/>
            <person name="Robbie E."/>
            <person name="Sanchez C."/>
            <person name="Schoenfeld J."/>
            <person name="Seshagiri S."/>
            <person name="Simmons L."/>
            <person name="Singh J."/>
            <person name="Smith V."/>
            <person name="Stinson J."/>
            <person name="Vagts A."/>
            <person name="Vandlen R.L."/>
            <person name="Watanabe C."/>
            <person name="Wieand D."/>
            <person name="Woods K."/>
            <person name="Xie M.-H."/>
            <person name="Yansura D.G."/>
            <person name="Yi S."/>
            <person name="Yu G."/>
            <person name="Yuan J."/>
            <person name="Zhang M."/>
            <person name="Zhang Z."/>
            <person name="Goddard A.D."/>
            <person name="Wood W.I."/>
            <person name="Godowski P.J."/>
            <person name="Gray A.M."/>
        </authorList>
    </citation>
    <scope>NUCLEOTIDE SEQUENCE [LARGE SCALE MRNA]</scope>
</reference>
<reference key="3">
    <citation type="journal article" date="2004" name="Nat. Genet.">
        <title>Complete sequencing and characterization of 21,243 full-length human cDNAs.</title>
        <authorList>
            <person name="Ota T."/>
            <person name="Suzuki Y."/>
            <person name="Nishikawa T."/>
            <person name="Otsuki T."/>
            <person name="Sugiyama T."/>
            <person name="Irie R."/>
            <person name="Wakamatsu A."/>
            <person name="Hayashi K."/>
            <person name="Sato H."/>
            <person name="Nagai K."/>
            <person name="Kimura K."/>
            <person name="Makita H."/>
            <person name="Sekine M."/>
            <person name="Obayashi M."/>
            <person name="Nishi T."/>
            <person name="Shibahara T."/>
            <person name="Tanaka T."/>
            <person name="Ishii S."/>
            <person name="Yamamoto J."/>
            <person name="Saito K."/>
            <person name="Kawai Y."/>
            <person name="Isono Y."/>
            <person name="Nakamura Y."/>
            <person name="Nagahari K."/>
            <person name="Murakami K."/>
            <person name="Yasuda T."/>
            <person name="Iwayanagi T."/>
            <person name="Wagatsuma M."/>
            <person name="Shiratori A."/>
            <person name="Sudo H."/>
            <person name="Hosoiri T."/>
            <person name="Kaku Y."/>
            <person name="Kodaira H."/>
            <person name="Kondo H."/>
            <person name="Sugawara M."/>
            <person name="Takahashi M."/>
            <person name="Kanda K."/>
            <person name="Yokoi T."/>
            <person name="Furuya T."/>
            <person name="Kikkawa E."/>
            <person name="Omura Y."/>
            <person name="Abe K."/>
            <person name="Kamihara K."/>
            <person name="Katsuta N."/>
            <person name="Sato K."/>
            <person name="Tanikawa M."/>
            <person name="Yamazaki M."/>
            <person name="Ninomiya K."/>
            <person name="Ishibashi T."/>
            <person name="Yamashita H."/>
            <person name="Murakawa K."/>
            <person name="Fujimori K."/>
            <person name="Tanai H."/>
            <person name="Kimata M."/>
            <person name="Watanabe M."/>
            <person name="Hiraoka S."/>
            <person name="Chiba Y."/>
            <person name="Ishida S."/>
            <person name="Ono Y."/>
            <person name="Takiguchi S."/>
            <person name="Watanabe S."/>
            <person name="Yosida M."/>
            <person name="Hotuta T."/>
            <person name="Kusano J."/>
            <person name="Kanehori K."/>
            <person name="Takahashi-Fujii A."/>
            <person name="Hara H."/>
            <person name="Tanase T.-O."/>
            <person name="Nomura Y."/>
            <person name="Togiya S."/>
            <person name="Komai F."/>
            <person name="Hara R."/>
            <person name="Takeuchi K."/>
            <person name="Arita M."/>
            <person name="Imose N."/>
            <person name="Musashino K."/>
            <person name="Yuuki H."/>
            <person name="Oshima A."/>
            <person name="Sasaki N."/>
            <person name="Aotsuka S."/>
            <person name="Yoshikawa Y."/>
            <person name="Matsunawa H."/>
            <person name="Ichihara T."/>
            <person name="Shiohata N."/>
            <person name="Sano S."/>
            <person name="Moriya S."/>
            <person name="Momiyama H."/>
            <person name="Satoh N."/>
            <person name="Takami S."/>
            <person name="Terashima Y."/>
            <person name="Suzuki O."/>
            <person name="Nakagawa S."/>
            <person name="Senoh A."/>
            <person name="Mizoguchi H."/>
            <person name="Goto Y."/>
            <person name="Shimizu F."/>
            <person name="Wakebe H."/>
            <person name="Hishigaki H."/>
            <person name="Watanabe T."/>
            <person name="Sugiyama A."/>
            <person name="Takemoto M."/>
            <person name="Kawakami B."/>
            <person name="Yamazaki M."/>
            <person name="Watanabe K."/>
            <person name="Kumagai A."/>
            <person name="Itakura S."/>
            <person name="Fukuzumi Y."/>
            <person name="Fujimori Y."/>
            <person name="Komiyama M."/>
            <person name="Tashiro H."/>
            <person name="Tanigami A."/>
            <person name="Fujiwara T."/>
            <person name="Ono T."/>
            <person name="Yamada K."/>
            <person name="Fujii Y."/>
            <person name="Ozaki K."/>
            <person name="Hirao M."/>
            <person name="Ohmori Y."/>
            <person name="Kawabata A."/>
            <person name="Hikiji T."/>
            <person name="Kobatake N."/>
            <person name="Inagaki H."/>
            <person name="Ikema Y."/>
            <person name="Okamoto S."/>
            <person name="Okitani R."/>
            <person name="Kawakami T."/>
            <person name="Noguchi S."/>
            <person name="Itoh T."/>
            <person name="Shigeta K."/>
            <person name="Senba T."/>
            <person name="Matsumura K."/>
            <person name="Nakajima Y."/>
            <person name="Mizuno T."/>
            <person name="Morinaga M."/>
            <person name="Sasaki M."/>
            <person name="Togashi T."/>
            <person name="Oyama M."/>
            <person name="Hata H."/>
            <person name="Watanabe M."/>
            <person name="Komatsu T."/>
            <person name="Mizushima-Sugano J."/>
            <person name="Satoh T."/>
            <person name="Shirai Y."/>
            <person name="Takahashi Y."/>
            <person name="Nakagawa K."/>
            <person name="Okumura K."/>
            <person name="Nagase T."/>
            <person name="Nomura N."/>
            <person name="Kikuchi H."/>
            <person name="Masuho Y."/>
            <person name="Yamashita R."/>
            <person name="Nakai K."/>
            <person name="Yada T."/>
            <person name="Nakamura Y."/>
            <person name="Ohara O."/>
            <person name="Isogai T."/>
            <person name="Sugano S."/>
        </authorList>
    </citation>
    <scope>NUCLEOTIDE SEQUENCE [LARGE SCALE MRNA]</scope>
    <source>
        <tissue>Kidney</tissue>
    </source>
</reference>
<reference key="4">
    <citation type="journal article" date="2005" name="Nature">
        <title>The DNA sequence of the human X chromosome.</title>
        <authorList>
            <person name="Ross M.T."/>
            <person name="Grafham D.V."/>
            <person name="Coffey A.J."/>
            <person name="Scherer S."/>
            <person name="McLay K."/>
            <person name="Muzny D."/>
            <person name="Platzer M."/>
            <person name="Howell G.R."/>
            <person name="Burrows C."/>
            <person name="Bird C.P."/>
            <person name="Frankish A."/>
            <person name="Lovell F.L."/>
            <person name="Howe K.L."/>
            <person name="Ashurst J.L."/>
            <person name="Fulton R.S."/>
            <person name="Sudbrak R."/>
            <person name="Wen G."/>
            <person name="Jones M.C."/>
            <person name="Hurles M.E."/>
            <person name="Andrews T.D."/>
            <person name="Scott C.E."/>
            <person name="Searle S."/>
            <person name="Ramser J."/>
            <person name="Whittaker A."/>
            <person name="Deadman R."/>
            <person name="Carter N.P."/>
            <person name="Hunt S.E."/>
            <person name="Chen R."/>
            <person name="Cree A."/>
            <person name="Gunaratne P."/>
            <person name="Havlak P."/>
            <person name="Hodgson A."/>
            <person name="Metzker M.L."/>
            <person name="Richards S."/>
            <person name="Scott G."/>
            <person name="Steffen D."/>
            <person name="Sodergren E."/>
            <person name="Wheeler D.A."/>
            <person name="Worley K.C."/>
            <person name="Ainscough R."/>
            <person name="Ambrose K.D."/>
            <person name="Ansari-Lari M.A."/>
            <person name="Aradhya S."/>
            <person name="Ashwell R.I."/>
            <person name="Babbage A.K."/>
            <person name="Bagguley C.L."/>
            <person name="Ballabio A."/>
            <person name="Banerjee R."/>
            <person name="Barker G.E."/>
            <person name="Barlow K.F."/>
            <person name="Barrett I.P."/>
            <person name="Bates K.N."/>
            <person name="Beare D.M."/>
            <person name="Beasley H."/>
            <person name="Beasley O."/>
            <person name="Beck A."/>
            <person name="Bethel G."/>
            <person name="Blechschmidt K."/>
            <person name="Brady N."/>
            <person name="Bray-Allen S."/>
            <person name="Bridgeman A.M."/>
            <person name="Brown A.J."/>
            <person name="Brown M.J."/>
            <person name="Bonnin D."/>
            <person name="Bruford E.A."/>
            <person name="Buhay C."/>
            <person name="Burch P."/>
            <person name="Burford D."/>
            <person name="Burgess J."/>
            <person name="Burrill W."/>
            <person name="Burton J."/>
            <person name="Bye J.M."/>
            <person name="Carder C."/>
            <person name="Carrel L."/>
            <person name="Chako J."/>
            <person name="Chapman J.C."/>
            <person name="Chavez D."/>
            <person name="Chen E."/>
            <person name="Chen G."/>
            <person name="Chen Y."/>
            <person name="Chen Z."/>
            <person name="Chinault C."/>
            <person name="Ciccodicola A."/>
            <person name="Clark S.Y."/>
            <person name="Clarke G."/>
            <person name="Clee C.M."/>
            <person name="Clegg S."/>
            <person name="Clerc-Blankenburg K."/>
            <person name="Clifford K."/>
            <person name="Cobley V."/>
            <person name="Cole C.G."/>
            <person name="Conquer J.S."/>
            <person name="Corby N."/>
            <person name="Connor R.E."/>
            <person name="David R."/>
            <person name="Davies J."/>
            <person name="Davis C."/>
            <person name="Davis J."/>
            <person name="Delgado O."/>
            <person name="Deshazo D."/>
            <person name="Dhami P."/>
            <person name="Ding Y."/>
            <person name="Dinh H."/>
            <person name="Dodsworth S."/>
            <person name="Draper H."/>
            <person name="Dugan-Rocha S."/>
            <person name="Dunham A."/>
            <person name="Dunn M."/>
            <person name="Durbin K.J."/>
            <person name="Dutta I."/>
            <person name="Eades T."/>
            <person name="Ellwood M."/>
            <person name="Emery-Cohen A."/>
            <person name="Errington H."/>
            <person name="Evans K.L."/>
            <person name="Faulkner L."/>
            <person name="Francis F."/>
            <person name="Frankland J."/>
            <person name="Fraser A.E."/>
            <person name="Galgoczy P."/>
            <person name="Gilbert J."/>
            <person name="Gill R."/>
            <person name="Gloeckner G."/>
            <person name="Gregory S.G."/>
            <person name="Gribble S."/>
            <person name="Griffiths C."/>
            <person name="Grocock R."/>
            <person name="Gu Y."/>
            <person name="Gwilliam R."/>
            <person name="Hamilton C."/>
            <person name="Hart E.A."/>
            <person name="Hawes A."/>
            <person name="Heath P.D."/>
            <person name="Heitmann K."/>
            <person name="Hennig S."/>
            <person name="Hernandez J."/>
            <person name="Hinzmann B."/>
            <person name="Ho S."/>
            <person name="Hoffs M."/>
            <person name="Howden P.J."/>
            <person name="Huckle E.J."/>
            <person name="Hume J."/>
            <person name="Hunt P.J."/>
            <person name="Hunt A.R."/>
            <person name="Isherwood J."/>
            <person name="Jacob L."/>
            <person name="Johnson D."/>
            <person name="Jones S."/>
            <person name="de Jong P.J."/>
            <person name="Joseph S.S."/>
            <person name="Keenan S."/>
            <person name="Kelly S."/>
            <person name="Kershaw J.K."/>
            <person name="Khan Z."/>
            <person name="Kioschis P."/>
            <person name="Klages S."/>
            <person name="Knights A.J."/>
            <person name="Kosiura A."/>
            <person name="Kovar-Smith C."/>
            <person name="Laird G.K."/>
            <person name="Langford C."/>
            <person name="Lawlor S."/>
            <person name="Leversha M."/>
            <person name="Lewis L."/>
            <person name="Liu W."/>
            <person name="Lloyd C."/>
            <person name="Lloyd D.M."/>
            <person name="Loulseged H."/>
            <person name="Loveland J.E."/>
            <person name="Lovell J.D."/>
            <person name="Lozado R."/>
            <person name="Lu J."/>
            <person name="Lyne R."/>
            <person name="Ma J."/>
            <person name="Maheshwari M."/>
            <person name="Matthews L.H."/>
            <person name="McDowall J."/>
            <person name="McLaren S."/>
            <person name="McMurray A."/>
            <person name="Meidl P."/>
            <person name="Meitinger T."/>
            <person name="Milne S."/>
            <person name="Miner G."/>
            <person name="Mistry S.L."/>
            <person name="Morgan M."/>
            <person name="Morris S."/>
            <person name="Mueller I."/>
            <person name="Mullikin J.C."/>
            <person name="Nguyen N."/>
            <person name="Nordsiek G."/>
            <person name="Nyakatura G."/>
            <person name="O'dell C.N."/>
            <person name="Okwuonu G."/>
            <person name="Palmer S."/>
            <person name="Pandian R."/>
            <person name="Parker D."/>
            <person name="Parrish J."/>
            <person name="Pasternak S."/>
            <person name="Patel D."/>
            <person name="Pearce A.V."/>
            <person name="Pearson D.M."/>
            <person name="Pelan S.E."/>
            <person name="Perez L."/>
            <person name="Porter K.M."/>
            <person name="Ramsey Y."/>
            <person name="Reichwald K."/>
            <person name="Rhodes S."/>
            <person name="Ridler K.A."/>
            <person name="Schlessinger D."/>
            <person name="Schueler M.G."/>
            <person name="Sehra H.K."/>
            <person name="Shaw-Smith C."/>
            <person name="Shen H."/>
            <person name="Sheridan E.M."/>
            <person name="Shownkeen R."/>
            <person name="Skuce C.D."/>
            <person name="Smith M.L."/>
            <person name="Sotheran E.C."/>
            <person name="Steingruber H.E."/>
            <person name="Steward C.A."/>
            <person name="Storey R."/>
            <person name="Swann R.M."/>
            <person name="Swarbreck D."/>
            <person name="Tabor P.E."/>
            <person name="Taudien S."/>
            <person name="Taylor T."/>
            <person name="Teague B."/>
            <person name="Thomas K."/>
            <person name="Thorpe A."/>
            <person name="Timms K."/>
            <person name="Tracey A."/>
            <person name="Trevanion S."/>
            <person name="Tromans A.C."/>
            <person name="d'Urso M."/>
            <person name="Verduzco D."/>
            <person name="Villasana D."/>
            <person name="Waldron L."/>
            <person name="Wall M."/>
            <person name="Wang Q."/>
            <person name="Warren J."/>
            <person name="Warry G.L."/>
            <person name="Wei X."/>
            <person name="West A."/>
            <person name="Whitehead S.L."/>
            <person name="Whiteley M.N."/>
            <person name="Wilkinson J.E."/>
            <person name="Willey D.L."/>
            <person name="Williams G."/>
            <person name="Williams L."/>
            <person name="Williamson A."/>
            <person name="Williamson H."/>
            <person name="Wilming L."/>
            <person name="Woodmansey R.L."/>
            <person name="Wray P.W."/>
            <person name="Yen J."/>
            <person name="Zhang J."/>
            <person name="Zhou J."/>
            <person name="Zoghbi H."/>
            <person name="Zorilla S."/>
            <person name="Buck D."/>
            <person name="Reinhardt R."/>
            <person name="Poustka A."/>
            <person name="Rosenthal A."/>
            <person name="Lehrach H."/>
            <person name="Meindl A."/>
            <person name="Minx P.J."/>
            <person name="Hillier L.W."/>
            <person name="Willard H.F."/>
            <person name="Wilson R.K."/>
            <person name="Waterston R.H."/>
            <person name="Rice C.M."/>
            <person name="Vaudin M."/>
            <person name="Coulson A."/>
            <person name="Nelson D.L."/>
            <person name="Weinstock G."/>
            <person name="Sulston J.E."/>
            <person name="Durbin R.M."/>
            <person name="Hubbard T."/>
            <person name="Gibbs R.A."/>
            <person name="Beck S."/>
            <person name="Rogers J."/>
            <person name="Bentley D.R."/>
        </authorList>
    </citation>
    <scope>NUCLEOTIDE SEQUENCE [LARGE SCALE GENOMIC DNA]</scope>
</reference>
<reference key="5">
    <citation type="submission" date="2005-07" db="EMBL/GenBank/DDBJ databases">
        <authorList>
            <person name="Mural R.J."/>
            <person name="Istrail S."/>
            <person name="Sutton G.G."/>
            <person name="Florea L."/>
            <person name="Halpern A.L."/>
            <person name="Mobarry C.M."/>
            <person name="Lippert R."/>
            <person name="Walenz B."/>
            <person name="Shatkay H."/>
            <person name="Dew I."/>
            <person name="Miller J.R."/>
            <person name="Flanigan M.J."/>
            <person name="Edwards N.J."/>
            <person name="Bolanos R."/>
            <person name="Fasulo D."/>
            <person name="Halldorsson B.V."/>
            <person name="Hannenhalli S."/>
            <person name="Turner R."/>
            <person name="Yooseph S."/>
            <person name="Lu F."/>
            <person name="Nusskern D.R."/>
            <person name="Shue B.C."/>
            <person name="Zheng X.H."/>
            <person name="Zhong F."/>
            <person name="Delcher A.L."/>
            <person name="Huson D.H."/>
            <person name="Kravitz S.A."/>
            <person name="Mouchard L."/>
            <person name="Reinert K."/>
            <person name="Remington K.A."/>
            <person name="Clark A.G."/>
            <person name="Waterman M.S."/>
            <person name="Eichler E.E."/>
            <person name="Adams M.D."/>
            <person name="Hunkapiller M.W."/>
            <person name="Myers E.W."/>
            <person name="Venter J.C."/>
        </authorList>
    </citation>
    <scope>NUCLEOTIDE SEQUENCE [LARGE SCALE GENOMIC DNA]</scope>
</reference>
<reference key="6">
    <citation type="journal article" date="2004" name="Genome Res.">
        <title>The status, quality, and expansion of the NIH full-length cDNA project: the Mammalian Gene Collection (MGC).</title>
        <authorList>
            <consortium name="The MGC Project Team"/>
        </authorList>
    </citation>
    <scope>NUCLEOTIDE SEQUENCE [LARGE SCALE MRNA]</scope>
    <source>
        <tissue>Bone marrow</tissue>
        <tissue>Colon</tissue>
        <tissue>Kidney</tissue>
    </source>
</reference>
<reference key="7">
    <citation type="journal article" date="2005" name="Cell Metab.">
        <title>The HNF-1 target collectrin controls insulin exocytosis by SNARE complex formation.</title>
        <authorList>
            <person name="Fukui K."/>
            <person name="Yang Q."/>
            <person name="Cao Y."/>
            <person name="Takahashi N."/>
            <person name="Hatakeyama H."/>
            <person name="Wang H."/>
            <person name="Wada J."/>
            <person name="Zhang Y."/>
            <person name="Marselli L."/>
            <person name="Nammo T."/>
            <person name="Yoneda K."/>
            <person name="Onishi M."/>
            <person name="Higashiyama S."/>
            <person name="Matsuzawa Y."/>
            <person name="Gonzalez F.J."/>
            <person name="Weir G.C."/>
            <person name="Kasai H."/>
            <person name="Shimomura I."/>
            <person name="Miyagawa J."/>
            <person name="Wollheim C.B."/>
            <person name="Yamagata K."/>
        </authorList>
    </citation>
    <scope>FUNCTION</scope>
    <scope>TISSUE SPECIFICITY</scope>
    <scope>INTERACTION WITH SNAPIN</scope>
</reference>
<reference key="8">
    <citation type="journal article" date="2011" name="Cell Metab.">
        <title>Bace2 is a beta cell-enriched protease that regulates pancreatic beta cell function and mass.</title>
        <authorList>
            <person name="Esterhazy D."/>
            <person name="Stuetzer I."/>
            <person name="Wang H."/>
            <person name="Rechsteiner M.P."/>
            <person name="Beauchamp J."/>
            <person name="Doebeli H."/>
            <person name="Hilpert H."/>
            <person name="Matile H."/>
            <person name="Prummer M."/>
            <person name="Schmidt A."/>
            <person name="Lieske N."/>
            <person name="Boehm B."/>
            <person name="Marselli L."/>
            <person name="Bosco D."/>
            <person name="Kerr-Conte J."/>
            <person name="Aebersold R."/>
            <person name="Spinas G.A."/>
            <person name="Moch H."/>
            <person name="Migliorini C."/>
            <person name="Stoffel M."/>
        </authorList>
    </citation>
    <scope>SUBCELLULAR LOCATION</scope>
    <scope>PROTEOLYTIC PROCESSING IN BETA CELLS</scope>
    <scope>IDENTIFICATION BY MASS SPECTROMETRY</scope>
</reference>
<reference key="9">
    <citation type="journal article" date="2012" name="Biol. Chem.">
        <title>Tmem27 dimerization, deglycosylation, plasma membrane depletion, and the extracellular Phe-Phe motif are negative regulators of cleavage by Bace2.</title>
        <authorList>
            <person name="Esterhazy D."/>
            <person name="Akpinar P."/>
            <person name="Stoffel M."/>
        </authorList>
    </citation>
    <scope>SUBCELLULAR LOCATION</scope>
    <scope>SUBUNIT</scope>
    <scope>PROTEOLYTIC PROCESSING IN BETA CELLS</scope>
    <scope>GLYCOSYLATION</scope>
    <scope>MUTAGENESIS OF CYS-75; ASN-76; ASN-93; 115-ALA--ASN-119; 123-LEU--ILE-128; CYS-152 AND CYS-186</scope>
</reference>
<reference key="10">
    <citation type="journal article" date="2019" name="Am. J. Med. Genet. A">
        <title>Loss of CLTRN function produces a neuropsychiatric disorder and a biochemical phenotype that mimics Hartnup disease.</title>
        <authorList>
            <person name="Pillai N.R."/>
            <person name="Yubero D."/>
            <person name="Shayota B.J."/>
            <person name="Oyarzabal A."/>
            <person name="Ghosh R."/>
            <person name="Sun Q."/>
            <person name="Azamian M.S."/>
            <person name="Arjona C."/>
            <person name="Brandi N."/>
            <person name="Palau F."/>
            <person name="Lalani S.R."/>
            <person name="Artuch R."/>
            <person name="Garcia-Cazorla A."/>
            <person name="Scott D.A."/>
        </authorList>
    </citation>
    <scope>INVOLVEMENT IN NEUROPSYCHIATRIC DISORDER</scope>
</reference>
<name>CLTRN_HUMAN</name>
<organism>
    <name type="scientific">Homo sapiens</name>
    <name type="common">Human</name>
    <dbReference type="NCBI Taxonomy" id="9606"/>
    <lineage>
        <taxon>Eukaryota</taxon>
        <taxon>Metazoa</taxon>
        <taxon>Chordata</taxon>
        <taxon>Craniata</taxon>
        <taxon>Vertebrata</taxon>
        <taxon>Euteleostomi</taxon>
        <taxon>Mammalia</taxon>
        <taxon>Eutheria</taxon>
        <taxon>Euarchontoglires</taxon>
        <taxon>Primates</taxon>
        <taxon>Haplorrhini</taxon>
        <taxon>Catarrhini</taxon>
        <taxon>Hominidae</taxon>
        <taxon>Homo</taxon>
    </lineage>
</organism>
<dbReference type="EMBL" id="AF229179">
    <property type="protein sequence ID" value="AAG09466.1"/>
    <property type="molecule type" value="mRNA"/>
</dbReference>
<dbReference type="EMBL" id="AY359060">
    <property type="protein sequence ID" value="AAQ89419.1"/>
    <property type="status" value="ALT_FRAME"/>
    <property type="molecule type" value="mRNA"/>
</dbReference>
<dbReference type="EMBL" id="AK313835">
    <property type="protein sequence ID" value="BAG36568.1"/>
    <property type="molecule type" value="mRNA"/>
</dbReference>
<dbReference type="EMBL" id="AC003669">
    <property type="status" value="NOT_ANNOTATED_CDS"/>
    <property type="molecule type" value="Genomic_DNA"/>
</dbReference>
<dbReference type="EMBL" id="AC112497">
    <property type="status" value="NOT_ANNOTATED_CDS"/>
    <property type="molecule type" value="Genomic_DNA"/>
</dbReference>
<dbReference type="EMBL" id="CH471074">
    <property type="protein sequence ID" value="EAW98894.1"/>
    <property type="molecule type" value="Genomic_DNA"/>
</dbReference>
<dbReference type="EMBL" id="BC014317">
    <property type="protein sequence ID" value="AAH14317.1"/>
    <property type="molecule type" value="mRNA"/>
</dbReference>
<dbReference type="EMBL" id="BC015099">
    <property type="protein sequence ID" value="AAH15099.1"/>
    <property type="molecule type" value="mRNA"/>
</dbReference>
<dbReference type="EMBL" id="BC050606">
    <property type="protein sequence ID" value="AAH50606.1"/>
    <property type="molecule type" value="mRNA"/>
</dbReference>
<dbReference type="CCDS" id="CCDS14170.1"/>
<dbReference type="RefSeq" id="NP_065716.1">
    <property type="nucleotide sequence ID" value="NM_020665.6"/>
</dbReference>
<dbReference type="SMR" id="Q9HBJ8"/>
<dbReference type="BioGRID" id="121500">
    <property type="interactions" value="6"/>
</dbReference>
<dbReference type="ComplexPortal" id="CPX-8191">
    <property type="entry name" value="B(0)AT1-Collectrin heteromeric amino acid transporter complex"/>
</dbReference>
<dbReference type="FunCoup" id="Q9HBJ8">
    <property type="interactions" value="60"/>
</dbReference>
<dbReference type="IntAct" id="Q9HBJ8">
    <property type="interactions" value="6"/>
</dbReference>
<dbReference type="MINT" id="Q9HBJ8"/>
<dbReference type="STRING" id="9606.ENSP00000369699"/>
<dbReference type="MEROPS" id="M02.M01"/>
<dbReference type="TCDB" id="2.A.22.6.3">
    <property type="family name" value="the neurotransmitter:sodium symporter (nss) family"/>
</dbReference>
<dbReference type="GlyCosmos" id="Q9HBJ8">
    <property type="glycosylation" value="2 sites, No reported glycans"/>
</dbReference>
<dbReference type="GlyGen" id="Q9HBJ8">
    <property type="glycosylation" value="2 sites, 11 N-linked glycans (1 site)"/>
</dbReference>
<dbReference type="iPTMnet" id="Q9HBJ8"/>
<dbReference type="PhosphoSitePlus" id="Q9HBJ8"/>
<dbReference type="BioMuta" id="TMEM27"/>
<dbReference type="DMDM" id="74734254"/>
<dbReference type="jPOST" id="Q9HBJ8"/>
<dbReference type="MassIVE" id="Q9HBJ8"/>
<dbReference type="PaxDb" id="9606-ENSP00000369699"/>
<dbReference type="PeptideAtlas" id="Q9HBJ8"/>
<dbReference type="ProteomicsDB" id="81565"/>
<dbReference type="Antibodypedia" id="23955">
    <property type="antibodies" value="199 antibodies from 18 providers"/>
</dbReference>
<dbReference type="DNASU" id="57393"/>
<dbReference type="Ensembl" id="ENST00000380342.4">
    <property type="protein sequence ID" value="ENSP00000369699.3"/>
    <property type="gene ID" value="ENSG00000147003.7"/>
</dbReference>
<dbReference type="GeneID" id="57393"/>
<dbReference type="KEGG" id="hsa:57393"/>
<dbReference type="MANE-Select" id="ENST00000380342.4">
    <property type="protein sequence ID" value="ENSP00000369699.3"/>
    <property type="RefSeq nucleotide sequence ID" value="NM_020665.6"/>
    <property type="RefSeq protein sequence ID" value="NP_065716.1"/>
</dbReference>
<dbReference type="UCSC" id="uc004cxc.4">
    <property type="organism name" value="human"/>
</dbReference>
<dbReference type="AGR" id="HGNC:29437"/>
<dbReference type="CTD" id="57393"/>
<dbReference type="DisGeNET" id="57393"/>
<dbReference type="GeneCards" id="CLTRN"/>
<dbReference type="HGNC" id="HGNC:29437">
    <property type="gene designation" value="CLTRN"/>
</dbReference>
<dbReference type="HPA" id="ENSG00000147003">
    <property type="expression patterns" value="Tissue enriched (kidney)"/>
</dbReference>
<dbReference type="MalaCards" id="CLTRN"/>
<dbReference type="MIM" id="300631">
    <property type="type" value="gene"/>
</dbReference>
<dbReference type="neXtProt" id="NX_Q9HBJ8"/>
<dbReference type="OpenTargets" id="ENSG00000147003"/>
<dbReference type="Orphanet" id="2116">
    <property type="disease" value="Hartnup disease"/>
</dbReference>
<dbReference type="PharmGKB" id="PA134994199"/>
<dbReference type="VEuPathDB" id="HostDB:ENSG00000147003"/>
<dbReference type="eggNOG" id="ENOG502RWVW">
    <property type="taxonomic scope" value="Eukaryota"/>
</dbReference>
<dbReference type="GeneTree" id="ENSGT00940000160862"/>
<dbReference type="HOGENOM" id="CLU_108544_0_0_1"/>
<dbReference type="InParanoid" id="Q9HBJ8"/>
<dbReference type="OMA" id="AYEWNES"/>
<dbReference type="OrthoDB" id="9899436at2759"/>
<dbReference type="PAN-GO" id="Q9HBJ8">
    <property type="GO annotations" value="2 GO annotations based on evolutionary models"/>
</dbReference>
<dbReference type="PhylomeDB" id="Q9HBJ8"/>
<dbReference type="TreeFam" id="TF335519"/>
<dbReference type="PathwayCommons" id="Q9HBJ8"/>
<dbReference type="Reactome" id="R-HSA-264876">
    <property type="pathway name" value="Insulin processing"/>
</dbReference>
<dbReference type="SignaLink" id="Q9HBJ8"/>
<dbReference type="BioGRID-ORCS" id="57393">
    <property type="hits" value="16 hits in 764 CRISPR screens"/>
</dbReference>
<dbReference type="ChiTaRS" id="TMEM27">
    <property type="organism name" value="human"/>
</dbReference>
<dbReference type="GenomeRNAi" id="57393"/>
<dbReference type="Pharos" id="Q9HBJ8">
    <property type="development level" value="Tbio"/>
</dbReference>
<dbReference type="PRO" id="PR:Q9HBJ8"/>
<dbReference type="Proteomes" id="UP000005640">
    <property type="component" value="Chromosome X"/>
</dbReference>
<dbReference type="RNAct" id="Q9HBJ8">
    <property type="molecule type" value="protein"/>
</dbReference>
<dbReference type="Bgee" id="ENSG00000147003">
    <property type="expression patterns" value="Expressed in kidney epithelium and 117 other cell types or tissues"/>
</dbReference>
<dbReference type="ExpressionAtlas" id="Q9HBJ8">
    <property type="expression patterns" value="baseline and differential"/>
</dbReference>
<dbReference type="GO" id="GO:0031526">
    <property type="term" value="C:brush border membrane"/>
    <property type="evidence" value="ECO:0007669"/>
    <property type="project" value="Ensembl"/>
</dbReference>
<dbReference type="GO" id="GO:0005737">
    <property type="term" value="C:cytoplasm"/>
    <property type="evidence" value="ECO:0000314"/>
    <property type="project" value="UniProtKB"/>
</dbReference>
<dbReference type="GO" id="GO:0070062">
    <property type="term" value="C:extracellular exosome"/>
    <property type="evidence" value="ECO:0007005"/>
    <property type="project" value="UniProtKB"/>
</dbReference>
<dbReference type="GO" id="GO:0005886">
    <property type="term" value="C:plasma membrane"/>
    <property type="evidence" value="ECO:0000314"/>
    <property type="project" value="UniProtKB"/>
</dbReference>
<dbReference type="GO" id="GO:0042803">
    <property type="term" value="F:protein homodimerization activity"/>
    <property type="evidence" value="ECO:0000314"/>
    <property type="project" value="UniProtKB"/>
</dbReference>
<dbReference type="GO" id="GO:0141109">
    <property type="term" value="F:transporter activator activity"/>
    <property type="evidence" value="ECO:0000316"/>
    <property type="project" value="ARUK-UCL"/>
</dbReference>
<dbReference type="GO" id="GO:0017156">
    <property type="term" value="P:calcium-ion regulated exocytosis"/>
    <property type="evidence" value="ECO:0000314"/>
    <property type="project" value="GO_Central"/>
</dbReference>
<dbReference type="GO" id="GO:0035773">
    <property type="term" value="P:insulin secretion involved in cellular response to glucose stimulus"/>
    <property type="evidence" value="ECO:0000314"/>
    <property type="project" value="GO_Central"/>
</dbReference>
<dbReference type="GO" id="GO:0051957">
    <property type="term" value="P:positive regulation of amino acid transport"/>
    <property type="evidence" value="ECO:0000318"/>
    <property type="project" value="GO_Central"/>
</dbReference>
<dbReference type="GO" id="GO:1905737">
    <property type="term" value="P:positive regulation of L-proline import across plasma membrane"/>
    <property type="evidence" value="ECO:0000316"/>
    <property type="project" value="ARUK-UCL"/>
</dbReference>
<dbReference type="GO" id="GO:0035493">
    <property type="term" value="P:SNARE complex assembly"/>
    <property type="evidence" value="ECO:0000314"/>
    <property type="project" value="GO_Central"/>
</dbReference>
<dbReference type="InterPro" id="IPR042944">
    <property type="entry name" value="Collectrin"/>
</dbReference>
<dbReference type="InterPro" id="IPR031588">
    <property type="entry name" value="Collectrin_dom"/>
</dbReference>
<dbReference type="PANTHER" id="PTHR46884">
    <property type="entry name" value="COLLECTRIN"/>
    <property type="match status" value="1"/>
</dbReference>
<dbReference type="PANTHER" id="PTHR46884:SF1">
    <property type="entry name" value="COLLECTRIN"/>
    <property type="match status" value="1"/>
</dbReference>
<dbReference type="Pfam" id="PF16959">
    <property type="entry name" value="Collectrin"/>
    <property type="match status" value="1"/>
</dbReference>
<dbReference type="PROSITE" id="PS52010">
    <property type="entry name" value="COLLECTRIN_LIKE"/>
    <property type="match status" value="1"/>
</dbReference>